<gene>
    <name type="primary">NLRP10</name>
    <name type="synonym">NALP10</name>
    <name type="synonym">NOD8</name>
    <name type="synonym">PYNOD</name>
</gene>
<dbReference type="EMBL" id="AY154465">
    <property type="protein sequence ID" value="AAO18161.1"/>
    <property type="molecule type" value="mRNA"/>
</dbReference>
<dbReference type="EMBL" id="AY489192">
    <property type="protein sequence ID" value="AAS67384.1"/>
    <property type="molecule type" value="mRNA"/>
</dbReference>
<dbReference type="EMBL" id="BK001110">
    <property type="protein sequence ID" value="DAA01243.1"/>
    <property type="molecule type" value="mRNA"/>
</dbReference>
<dbReference type="EMBL" id="BC104957">
    <property type="protein sequence ID" value="AAI04958.1"/>
    <property type="molecule type" value="mRNA"/>
</dbReference>
<dbReference type="CCDS" id="CCDS7784.1"/>
<dbReference type="RefSeq" id="NP_001378887.1">
    <property type="nucleotide sequence ID" value="NM_001391958.1"/>
</dbReference>
<dbReference type="RefSeq" id="NP_789791.1">
    <property type="nucleotide sequence ID" value="NM_176821.4"/>
</dbReference>
<dbReference type="RefSeq" id="XP_011518345.1">
    <property type="nucleotide sequence ID" value="XM_011520043.2"/>
</dbReference>
<dbReference type="PDB" id="2M5V">
    <property type="method" value="NMR"/>
    <property type="chains" value="A=1-100"/>
</dbReference>
<dbReference type="PDBsum" id="2M5V"/>
<dbReference type="BMRB" id="Q86W26"/>
<dbReference type="SMR" id="Q86W26"/>
<dbReference type="BioGRID" id="130709">
    <property type="interactions" value="14"/>
</dbReference>
<dbReference type="FunCoup" id="Q86W26">
    <property type="interactions" value="75"/>
</dbReference>
<dbReference type="IntAct" id="Q86W26">
    <property type="interactions" value="8"/>
</dbReference>
<dbReference type="STRING" id="9606.ENSP00000327763"/>
<dbReference type="iPTMnet" id="Q86W26"/>
<dbReference type="PhosphoSitePlus" id="Q86W26"/>
<dbReference type="SwissPalm" id="Q86W26"/>
<dbReference type="BioMuta" id="NLRP10"/>
<dbReference type="DMDM" id="46396380"/>
<dbReference type="jPOST" id="Q86W26"/>
<dbReference type="MassIVE" id="Q86W26"/>
<dbReference type="PaxDb" id="9606-ENSP00000327763"/>
<dbReference type="PeptideAtlas" id="Q86W26"/>
<dbReference type="ProteomicsDB" id="70105"/>
<dbReference type="Pumba" id="Q86W26"/>
<dbReference type="Antibodypedia" id="42324">
    <property type="antibodies" value="198 antibodies from 31 providers"/>
</dbReference>
<dbReference type="DNASU" id="338322"/>
<dbReference type="Ensembl" id="ENST00000328600.3">
    <property type="protein sequence ID" value="ENSP00000327763.2"/>
    <property type="gene ID" value="ENSG00000182261.5"/>
</dbReference>
<dbReference type="Ensembl" id="ENST00000612291.2">
    <property type="protein sequence ID" value="ENSP00000478480.1"/>
    <property type="gene ID" value="ENSG00000276780.2"/>
</dbReference>
<dbReference type="Ensembl" id="ENST00000625327.2">
    <property type="protein sequence ID" value="ENSP00000486762.1"/>
    <property type="gene ID" value="ENSG00000281166.2"/>
</dbReference>
<dbReference type="Ensembl" id="ENST00000691676.1">
    <property type="protein sequence ID" value="ENSP00000509542.1"/>
    <property type="gene ID" value="ENSG00000182261.5"/>
</dbReference>
<dbReference type="GeneID" id="338322"/>
<dbReference type="KEGG" id="hsa:338322"/>
<dbReference type="MANE-Select" id="ENST00000691676.1">
    <property type="protein sequence ID" value="ENSP00000509542.1"/>
    <property type="RefSeq nucleotide sequence ID" value="NM_001391958.1"/>
    <property type="RefSeq protein sequence ID" value="NP_001378887.1"/>
</dbReference>
<dbReference type="UCSC" id="uc001mfv.2">
    <property type="organism name" value="human"/>
</dbReference>
<dbReference type="AGR" id="HGNC:21464"/>
<dbReference type="CTD" id="338322"/>
<dbReference type="DisGeNET" id="338322"/>
<dbReference type="GeneCards" id="NLRP10"/>
<dbReference type="HGNC" id="HGNC:21464">
    <property type="gene designation" value="NLRP10"/>
</dbReference>
<dbReference type="HPA" id="ENSG00000182261">
    <property type="expression patterns" value="Group enriched (breast, skin)"/>
</dbReference>
<dbReference type="MIM" id="609662">
    <property type="type" value="gene"/>
</dbReference>
<dbReference type="neXtProt" id="NX_Q86W26"/>
<dbReference type="OpenTargets" id="ENSG00000182261"/>
<dbReference type="PharmGKB" id="PA162397832"/>
<dbReference type="VEuPathDB" id="HostDB:ENSG00000182261"/>
<dbReference type="eggNOG" id="ENOG502RT64">
    <property type="taxonomic scope" value="Eukaryota"/>
</dbReference>
<dbReference type="GeneTree" id="ENSGT00940000159520"/>
<dbReference type="HOGENOM" id="CLU_002274_2_3_1"/>
<dbReference type="InParanoid" id="Q86W26"/>
<dbReference type="OMA" id="EMTLSMQ"/>
<dbReference type="OrthoDB" id="120976at2759"/>
<dbReference type="PAN-GO" id="Q86W26">
    <property type="GO annotations" value="2 GO annotations based on evolutionary models"/>
</dbReference>
<dbReference type="PhylomeDB" id="Q86W26"/>
<dbReference type="PathwayCommons" id="Q86W26"/>
<dbReference type="SignaLink" id="Q86W26"/>
<dbReference type="BioGRID-ORCS" id="338322">
    <property type="hits" value="15 hits in 1148 CRISPR screens"/>
</dbReference>
<dbReference type="EvolutionaryTrace" id="Q86W26"/>
<dbReference type="GeneWiki" id="NLRP10"/>
<dbReference type="GenomeRNAi" id="338322"/>
<dbReference type="Pharos" id="Q86W26">
    <property type="development level" value="Tbio"/>
</dbReference>
<dbReference type="PRO" id="PR:Q86W26"/>
<dbReference type="Proteomes" id="UP000005640">
    <property type="component" value="Chromosome 11"/>
</dbReference>
<dbReference type="RNAct" id="Q86W26">
    <property type="molecule type" value="protein"/>
</dbReference>
<dbReference type="Bgee" id="ENSG00000182261">
    <property type="expression patterns" value="Expressed in skin of leg and 23 other cell types or tissues"/>
</dbReference>
<dbReference type="ExpressionAtlas" id="Q86W26">
    <property type="expression patterns" value="baseline and differential"/>
</dbReference>
<dbReference type="GO" id="GO:0005737">
    <property type="term" value="C:cytoplasm"/>
    <property type="evidence" value="ECO:0000314"/>
    <property type="project" value="UniProtKB"/>
</dbReference>
<dbReference type="GO" id="GO:0009898">
    <property type="term" value="C:cytoplasmic side of plasma membrane"/>
    <property type="evidence" value="ECO:0000314"/>
    <property type="project" value="UniProtKB"/>
</dbReference>
<dbReference type="GO" id="GO:0005829">
    <property type="term" value="C:cytosol"/>
    <property type="evidence" value="ECO:0000314"/>
    <property type="project" value="HPA"/>
</dbReference>
<dbReference type="GO" id="GO:0031965">
    <property type="term" value="C:nuclear membrane"/>
    <property type="evidence" value="ECO:0000314"/>
    <property type="project" value="HPA"/>
</dbReference>
<dbReference type="GO" id="GO:0005654">
    <property type="term" value="C:nucleoplasm"/>
    <property type="evidence" value="ECO:0000314"/>
    <property type="project" value="HPA"/>
</dbReference>
<dbReference type="GO" id="GO:0005524">
    <property type="term" value="F:ATP binding"/>
    <property type="evidence" value="ECO:0007669"/>
    <property type="project" value="UniProtKB-KW"/>
</dbReference>
<dbReference type="GO" id="GO:0016887">
    <property type="term" value="F:ATP hydrolysis activity"/>
    <property type="evidence" value="ECO:0000314"/>
    <property type="project" value="UniProtKB"/>
</dbReference>
<dbReference type="GO" id="GO:0003924">
    <property type="term" value="F:GTPase activity"/>
    <property type="evidence" value="ECO:0000314"/>
    <property type="project" value="UniProtKB"/>
</dbReference>
<dbReference type="GO" id="GO:0002218">
    <property type="term" value="P:activation of innate immune response"/>
    <property type="evidence" value="ECO:0000315"/>
    <property type="project" value="UniProtKB"/>
</dbReference>
<dbReference type="GO" id="GO:0002250">
    <property type="term" value="P:adaptive immune response"/>
    <property type="evidence" value="ECO:0007669"/>
    <property type="project" value="UniProtKB-KW"/>
</dbReference>
<dbReference type="GO" id="GO:0050832">
    <property type="term" value="P:defense response to fungus"/>
    <property type="evidence" value="ECO:0000250"/>
    <property type="project" value="UniProtKB"/>
</dbReference>
<dbReference type="GO" id="GO:0006954">
    <property type="term" value="P:inflammatory response"/>
    <property type="evidence" value="ECO:0007669"/>
    <property type="project" value="UniProtKB-KW"/>
</dbReference>
<dbReference type="GO" id="GO:0045087">
    <property type="term" value="P:innate immune response"/>
    <property type="evidence" value="ECO:0007669"/>
    <property type="project" value="UniProtKB-KW"/>
</dbReference>
<dbReference type="GO" id="GO:1900426">
    <property type="term" value="P:positive regulation of defense response to bacterium"/>
    <property type="evidence" value="ECO:0000315"/>
    <property type="project" value="UniProtKB"/>
</dbReference>
<dbReference type="GO" id="GO:0050729">
    <property type="term" value="P:positive regulation of inflammatory response"/>
    <property type="evidence" value="ECO:0000250"/>
    <property type="project" value="UniProtKB"/>
</dbReference>
<dbReference type="GO" id="GO:0032730">
    <property type="term" value="P:positive regulation of interleukin-1 alpha production"/>
    <property type="evidence" value="ECO:0000315"/>
    <property type="project" value="UniProtKB"/>
</dbReference>
<dbReference type="GO" id="GO:0032755">
    <property type="term" value="P:positive regulation of interleukin-6 production"/>
    <property type="evidence" value="ECO:0000315"/>
    <property type="project" value="UniProtKB"/>
</dbReference>
<dbReference type="GO" id="GO:0032757">
    <property type="term" value="P:positive regulation of interleukin-8 production"/>
    <property type="evidence" value="ECO:0000315"/>
    <property type="project" value="UniProtKB"/>
</dbReference>
<dbReference type="GO" id="GO:0002827">
    <property type="term" value="P:positive regulation of T-helper 1 type immune response"/>
    <property type="evidence" value="ECO:0000250"/>
    <property type="project" value="UniProtKB"/>
</dbReference>
<dbReference type="GO" id="GO:2000318">
    <property type="term" value="P:positive regulation of T-helper 17 type immune response"/>
    <property type="evidence" value="ECO:0000250"/>
    <property type="project" value="UniProtKB"/>
</dbReference>
<dbReference type="GO" id="GO:0050727">
    <property type="term" value="P:regulation of inflammatory response"/>
    <property type="evidence" value="ECO:0000318"/>
    <property type="project" value="GO_Central"/>
</dbReference>
<dbReference type="CDD" id="cd08321">
    <property type="entry name" value="Pyrin_ASC-like"/>
    <property type="match status" value="1"/>
</dbReference>
<dbReference type="FunFam" id="1.10.533.10:FF:000091">
    <property type="entry name" value="NLR family pyrin domain containing 10"/>
    <property type="match status" value="1"/>
</dbReference>
<dbReference type="FunFam" id="3.40.50.300:FF:002112">
    <property type="entry name" value="NLR family pyrin domain containing 10"/>
    <property type="match status" value="1"/>
</dbReference>
<dbReference type="Gene3D" id="1.10.533.10">
    <property type="entry name" value="Death Domain, Fas"/>
    <property type="match status" value="1"/>
</dbReference>
<dbReference type="Gene3D" id="3.40.50.300">
    <property type="entry name" value="P-loop containing nucleotide triphosphate hydrolases"/>
    <property type="match status" value="1"/>
</dbReference>
<dbReference type="InterPro" id="IPR004020">
    <property type="entry name" value="DAPIN"/>
</dbReference>
<dbReference type="InterPro" id="IPR011029">
    <property type="entry name" value="DEATH-like_dom_sf"/>
</dbReference>
<dbReference type="InterPro" id="IPR007111">
    <property type="entry name" value="NACHT_NTPase"/>
</dbReference>
<dbReference type="InterPro" id="IPR050637">
    <property type="entry name" value="NLRP_innate_immun_reg"/>
</dbReference>
<dbReference type="InterPro" id="IPR041075">
    <property type="entry name" value="NOD1/2_WH"/>
</dbReference>
<dbReference type="InterPro" id="IPR027417">
    <property type="entry name" value="P-loop_NTPase"/>
</dbReference>
<dbReference type="PANTHER" id="PTHR45690:SF4">
    <property type="entry name" value="NACHT, LRR AND PYD DOMAINS-CONTAINING PROTEIN 10"/>
    <property type="match status" value="1"/>
</dbReference>
<dbReference type="PANTHER" id="PTHR45690">
    <property type="entry name" value="NACHT, LRR AND PYD DOMAINS-CONTAINING PROTEIN 12"/>
    <property type="match status" value="1"/>
</dbReference>
<dbReference type="Pfam" id="PF05729">
    <property type="entry name" value="NACHT"/>
    <property type="match status" value="1"/>
</dbReference>
<dbReference type="Pfam" id="PF17779">
    <property type="entry name" value="NOD2_WH"/>
    <property type="match status" value="1"/>
</dbReference>
<dbReference type="Pfam" id="PF02758">
    <property type="entry name" value="PYRIN"/>
    <property type="match status" value="1"/>
</dbReference>
<dbReference type="SMART" id="SM01289">
    <property type="entry name" value="PYRIN"/>
    <property type="match status" value="1"/>
</dbReference>
<dbReference type="SUPFAM" id="SSF47986">
    <property type="entry name" value="DEATH domain"/>
    <property type="match status" value="1"/>
</dbReference>
<dbReference type="SUPFAM" id="SSF52540">
    <property type="entry name" value="P-loop containing nucleoside triphosphate hydrolases"/>
    <property type="match status" value="1"/>
</dbReference>
<dbReference type="PROSITE" id="PS50824">
    <property type="entry name" value="DAPIN"/>
    <property type="match status" value="1"/>
</dbReference>
<dbReference type="PROSITE" id="PS50837">
    <property type="entry name" value="NACHT"/>
    <property type="match status" value="1"/>
</dbReference>
<proteinExistence type="evidence at protein level"/>
<protein>
    <recommendedName>
        <fullName>NACHT, LRR and PYD domains-containing protein 10</fullName>
    </recommendedName>
    <alternativeName>
        <fullName>Nucleotide-binding oligomerization domain protein 8</fullName>
    </alternativeName>
</protein>
<reference key="1">
    <citation type="journal article" date="2003" name="Nat. Rev. Mol. Cell Biol.">
        <title>NALPs: a novel protein family involved in inflammation.</title>
        <authorList>
            <person name="Tschopp J."/>
            <person name="Martinon F."/>
            <person name="Burns K."/>
        </authorList>
    </citation>
    <scope>NUCLEOTIDE SEQUENCE [MRNA]</scope>
</reference>
<reference key="2">
    <citation type="journal article" date="2004" name="Int. Immunol.">
        <title>PYNOD, a novel Apaf-1/CED4-like protein is an inhibitor of ASC and caspase-1.</title>
        <authorList>
            <person name="Wang Y."/>
            <person name="Hasegawa M."/>
            <person name="Imamura R."/>
            <person name="Kinoshita T."/>
            <person name="Kondo C."/>
            <person name="Konaka K."/>
            <person name="Suda T."/>
        </authorList>
    </citation>
    <scope>NUCLEOTIDE SEQUENCE [MRNA]</scope>
    <scope>FUNCTION</scope>
    <scope>OLIGOMERIZATION</scope>
    <scope>INTERACTION WITH PYCARD; CASP1 AND IL1B</scope>
    <scope>TISSUE SPECIFICITY</scope>
    <source>
        <tissue>Heart</tissue>
    </source>
</reference>
<reference key="3">
    <citation type="journal article" date="2003" name="Nat. Rev. Immunol.">
        <title>NODs: intracellular proteins involved in inflammation and apoptosis.</title>
        <authorList>
            <person name="Inohara N."/>
            <person name="Nunez G."/>
        </authorList>
    </citation>
    <scope>NUCLEOTIDE SEQUENCE [MRNA]</scope>
</reference>
<reference key="4">
    <citation type="journal article" date="2004" name="Genome Res.">
        <title>The status, quality, and expansion of the NIH full-length cDNA project: the Mammalian Gene Collection (MGC).</title>
        <authorList>
            <consortium name="The MGC Project Team"/>
        </authorList>
    </citation>
    <scope>NUCLEOTIDE SEQUENCE [LARGE SCALE MRNA]</scope>
</reference>
<reference key="5">
    <citation type="journal article" date="2010" name="J. Immunol.">
        <title>Anti-inflammatory activity of PYNOD and its mechanism in humans and mice.</title>
        <authorList>
            <person name="Imamura R."/>
            <person name="Wang Y."/>
            <person name="Kinoshita T."/>
            <person name="Suzuki M."/>
            <person name="Noda T."/>
            <person name="Sagara J."/>
            <person name="Taniguchi S."/>
            <person name="Okamoto H."/>
            <person name="Suda T."/>
        </authorList>
    </citation>
    <scope>FUNCTION</scope>
</reference>
<reference key="6">
    <citation type="journal article" date="2012" name="Cell. Microbiol.">
        <title>NLRP10 enhances Shigella-induced pro-inflammatory responses.</title>
        <authorList>
            <person name="Lautz K."/>
            <person name="Damm A."/>
            <person name="Menning M."/>
            <person name="Wenger J."/>
            <person name="Adam A.C."/>
            <person name="Zigrino P."/>
            <person name="Kremmer E."/>
            <person name="Kufer T.A."/>
        </authorList>
    </citation>
    <scope>FUNCTION</scope>
    <scope>INTERACTION WITH IKBKG; NOD1; NR2C2 AND RIPK2</scope>
    <scope>SUBCELLULAR LOCATION</scope>
    <scope>TISSUE SPECIFICITY</scope>
    <scope>MUTAGENESIS OF LYS-179 AND ASP-252</scope>
</reference>
<reference key="7">
    <citation type="journal article" date="2017" name="Inn. Immun.">
        <title>Involvement of NLRP10 in IL-1alpha induction of oral epithelial cells by periodontal pathogens.</title>
        <authorList>
            <person name="Lee S.J."/>
            <person name="Choi B.K."/>
        </authorList>
    </citation>
    <scope>FUNCTION</scope>
    <scope>INDUCTION</scope>
</reference>
<reference key="8">
    <citation type="journal article" date="2013" name="Biomol. NMR. Assign.">
        <title>(1)H, (13)C and (15)N resonance assignments of the pyrin domain from human PYNOD.</title>
        <authorList>
            <person name="Su M.Y."/>
            <person name="Chang C.I."/>
            <person name="Chang C.F."/>
        </authorList>
    </citation>
    <scope>PRELIMINARY STRUCTURE BY NMR OF 1-100</scope>
</reference>
<reference key="9">
    <citation type="journal article" date="2013" name="PLoS ONE">
        <title>Three-dimensional structure of human NLRP10/PYNOD pyrin domain reveals a homotypic interaction site distinct from its mouse homologue.</title>
        <authorList>
            <person name="Su M.Y."/>
            <person name="Kuo C.I."/>
            <person name="Chang C.F."/>
            <person name="Chang C.I."/>
        </authorList>
    </citation>
    <scope>STRUCTURE BY NMR OF 1-100</scope>
    <scope>FUNCTION</scope>
    <scope>BIOPHYSICOCHEMICAL PROPERTIES</scope>
</reference>
<keyword id="KW-0002">3D-structure</keyword>
<keyword id="KW-1064">Adaptive immunity</keyword>
<keyword id="KW-0067">ATP-binding</keyword>
<keyword id="KW-1003">Cell membrane</keyword>
<keyword id="KW-0963">Cytoplasm</keyword>
<keyword id="KW-0391">Immunity</keyword>
<keyword id="KW-0395">Inflammatory response</keyword>
<keyword id="KW-0399">Innate immunity</keyword>
<keyword id="KW-0472">Membrane</keyword>
<keyword id="KW-0547">Nucleotide-binding</keyword>
<keyword id="KW-1267">Proteomics identification</keyword>
<keyword id="KW-1185">Reference proteome</keyword>
<evidence type="ECO:0000250" key="1">
    <source>
        <dbReference type="UniProtKB" id="Q8CCN1"/>
    </source>
</evidence>
<evidence type="ECO:0000255" key="2">
    <source>
        <dbReference type="PROSITE-ProRule" id="PRU00061"/>
    </source>
</evidence>
<evidence type="ECO:0000255" key="3">
    <source>
        <dbReference type="PROSITE-ProRule" id="PRU00136"/>
    </source>
</evidence>
<evidence type="ECO:0000256" key="4">
    <source>
        <dbReference type="SAM" id="MobiDB-lite"/>
    </source>
</evidence>
<evidence type="ECO:0000269" key="5">
    <source>
    </source>
</evidence>
<evidence type="ECO:0000269" key="6">
    <source>
    </source>
</evidence>
<evidence type="ECO:0000269" key="7">
    <source>
    </source>
</evidence>
<evidence type="ECO:0000269" key="8">
    <source>
    </source>
</evidence>
<evidence type="ECO:0000269" key="9">
    <source>
    </source>
</evidence>
<evidence type="ECO:0000305" key="10"/>
<evidence type="ECO:0007829" key="11">
    <source>
        <dbReference type="PDB" id="2M5V"/>
    </source>
</evidence>
<comment type="function">
    <text evidence="1 5 6 7 8">Inhibits autoprocessing of CASP1, CASP1-dependent IL1B secretion, PYCARD aggregation and PYCARD-mediated apoptosis but not apoptosis induced by FAS or BID (PubMed:15096476). Displays anti-inflammatory activity (PubMed:20393137). Required for immunity against C.albicans infection (By similarity). Involved in the innate immune response by contributing to pro-inflammatory cytokine release in response to invasive bacterial infection (PubMed:22672233). Contributes to T-cell-mediated inflammatory responses in the skin (By similarity). Plays a role in protection against periodontitis through its involvement in induction of IL1A via ERK activation in oral epithelial cells infected with periodontal pathogens (PubMed:28766990). Exhibits both ATPase and GTPase activities (PubMed:23861819).</text>
</comment>
<comment type="biophysicochemical properties">
    <kinetics>
        <KM evidence="8">169.3 uM for ATP</KM>
        <KM evidence="8">295.6 uM for GTP</KM>
    </kinetics>
</comment>
<comment type="subunit">
    <text evidence="5 7">Oligomerizes (PubMed:15096476). Interacts with PYCARD (PubMed:15096476). Also interacts with CASP1 and IL1B (PubMed:15096476). Interacts with NOD1 and components of the NOD1 signaling pathway including RIPK2, NR2C2/TAK1 and IKBKG/NEMO (PubMed:22672233).</text>
</comment>
<comment type="subcellular location">
    <subcellularLocation>
        <location evidence="7">Cytoplasm</location>
    </subcellularLocation>
    <subcellularLocation>
        <location evidence="7">Cell membrane</location>
        <topology evidence="10">Peripheral membrane protein</topology>
    </subcellularLocation>
    <text evidence="7">Cytoplasmic protein which is recruited to the cell membrane by NOD1 following invasive bacterial infection.</text>
</comment>
<comment type="tissue specificity">
    <text evidence="5 7">Highly expressed in basal and suprabasal epidermal cell layers with lower levels in dermal fibroblast cells (at protein level) (PubMed:22672233). Widely expressed with highest levels in heart, brain and skeletal muscle (PubMed:15096476). Also expressed in liver, colon, dermis and epidermis (PubMed:15096476). Little expression detected in myeloid cells or peripheral blood mononuclear cells (PubMed:15096476).</text>
</comment>
<comment type="induction">
    <text evidence="9">By infection with the periodontal pathogens T.forsythia and F.nucleatum (at protein level).</text>
</comment>
<comment type="domain">
    <text>The pyrin and ATP-binding domains are required to elicit cytokine release following bacterial infection.</text>
</comment>
<comment type="domain">
    <text>The NACHT domain is required for inhibition of CASP1 autoprocessing.</text>
</comment>
<comment type="similarity">
    <text evidence="10">Belongs to the NLRP family.</text>
</comment>
<comment type="caution">
    <text evidence="10">Despite its official name, does not contain LRR repeats.</text>
</comment>
<comment type="caution">
    <text evidence="1">Was originally thought to play a role in adaptive immunity through control of dendritic cell-mediated antigen transport to lymph nodes from peripheral sites. However, this was later shown to be dependent on DOCK8.</text>
</comment>
<accession>Q86W26</accession>
<accession>Q2M3C4</accession>
<accession>Q6JGT0</accession>
<organism>
    <name type="scientific">Homo sapiens</name>
    <name type="common">Human</name>
    <dbReference type="NCBI Taxonomy" id="9606"/>
    <lineage>
        <taxon>Eukaryota</taxon>
        <taxon>Metazoa</taxon>
        <taxon>Chordata</taxon>
        <taxon>Craniata</taxon>
        <taxon>Vertebrata</taxon>
        <taxon>Euteleostomi</taxon>
        <taxon>Mammalia</taxon>
        <taxon>Eutheria</taxon>
        <taxon>Euarchontoglires</taxon>
        <taxon>Primates</taxon>
        <taxon>Haplorrhini</taxon>
        <taxon>Catarrhini</taxon>
        <taxon>Hominidae</taxon>
        <taxon>Homo</taxon>
    </lineage>
</organism>
<sequence length="655" mass="75032">MAMAKARKPREALLWALSDLEENDFKKLKFYLRDMTLSEGQPPLARGELEGLIPVDLAELLISKYGEKEAVKVVLKGLKVMNLLELVDQLSHICLHDYREVYREHVRCLEEWQEAGVNGRYNQVLLVAKPSSESPESLACPFPEQELESVTVEALFDSGEKPSLAPSLVVLQGSAGTGKTTLARKMVLDWATGTLYPGRFDYVFYVSCKEVVLLLESKLEQLLFWCCGDNQAPVTEILRQPERLLFILDGFDELQRPFEEKLKKRGLSPKESLLHLLIRRHTLPTCSLLITTRPLALRNLEPLLKQARHVHILGFSEEERARYFSSYFTDEKQADRAFDIVQKNDILYKACQVPGICWVVCSWLQGQMERGKVVLETPRNSTDIFMAYVSTFLPPDDDGGCSELSRHRVLRSLCSLAAEGIQHQRFLFEEAELRKHNLDGPRLAAFLSSNDYQLGLAIKKFYSFRHISFQDFFHAMSYLVKEDQSRLGKESRREVQRLLEVKEQEGNDEMTLTMQFLLDISKKDSFSNLELKFCFRISPCLAQDLKHFKEQMESMKHNRTWDLEFSLYEAKIKNLVKGIQMNNVSFKIKHSNEKKSQSQNLFSVKSSLSHGPKEEQKCPSVHGQKEGKDNIAGTQKEASTGKGRGTEETPKNTYI</sequence>
<feature type="chain" id="PRO_0000080896" description="NACHT, LRR and PYD domains-containing protein 10">
    <location>
        <begin position="1"/>
        <end position="655"/>
    </location>
</feature>
<feature type="domain" description="Pyrin" evidence="2">
    <location>
        <begin position="1"/>
        <end position="96"/>
    </location>
</feature>
<feature type="domain" description="NACHT" evidence="3">
    <location>
        <begin position="167"/>
        <end position="484"/>
    </location>
</feature>
<feature type="region of interest" description="Disordered" evidence="4">
    <location>
        <begin position="597"/>
        <end position="655"/>
    </location>
</feature>
<feature type="compositionally biased region" description="Polar residues" evidence="4">
    <location>
        <begin position="597"/>
        <end position="609"/>
    </location>
</feature>
<feature type="compositionally biased region" description="Basic and acidic residues" evidence="4">
    <location>
        <begin position="611"/>
        <end position="629"/>
    </location>
</feature>
<feature type="compositionally biased region" description="Basic and acidic residues" evidence="4">
    <location>
        <begin position="644"/>
        <end position="655"/>
    </location>
</feature>
<feature type="binding site" evidence="3">
    <location>
        <begin position="173"/>
        <end position="180"/>
    </location>
    <ligand>
        <name>ATP</name>
        <dbReference type="ChEBI" id="CHEBI:30616"/>
    </ligand>
</feature>
<feature type="mutagenesis site" description="Reduced release of IL8 following invasive bacterial infection." evidence="7">
    <original>K</original>
    <variation>A</variation>
    <location>
        <position position="179"/>
    </location>
</feature>
<feature type="mutagenesis site" description="Reduced release of IL8 following invasive bacterial infection." evidence="7">
    <original>D</original>
    <variation>A</variation>
    <location>
        <position position="252"/>
    </location>
</feature>
<feature type="helix" evidence="11">
    <location>
        <begin position="9"/>
        <end position="19"/>
    </location>
</feature>
<feature type="helix" evidence="11">
    <location>
        <begin position="22"/>
        <end position="36"/>
    </location>
</feature>
<feature type="helix" evidence="11">
    <location>
        <begin position="46"/>
        <end position="48"/>
    </location>
</feature>
<feature type="turn" evidence="11">
    <location>
        <begin position="49"/>
        <end position="51"/>
    </location>
</feature>
<feature type="helix" evidence="11">
    <location>
        <begin position="54"/>
        <end position="64"/>
    </location>
</feature>
<feature type="helix" evidence="11">
    <location>
        <begin position="67"/>
        <end position="79"/>
    </location>
</feature>
<feature type="turn" evidence="11">
    <location>
        <begin position="80"/>
        <end position="82"/>
    </location>
</feature>
<feature type="helix" evidence="11">
    <location>
        <begin position="84"/>
        <end position="93"/>
    </location>
</feature>
<feature type="helix" evidence="11">
    <location>
        <begin position="96"/>
        <end position="98"/>
    </location>
</feature>
<name>NAL10_HUMAN</name>